<comment type="similarity">
    <text evidence="1">Belongs to the Ves family.</text>
</comment>
<evidence type="ECO:0000255" key="1">
    <source>
        <dbReference type="HAMAP-Rule" id="MF_01591"/>
    </source>
</evidence>
<reference key="1">
    <citation type="journal article" date="2007" name="J. Bacteriol.">
        <title>The genome sequence of avian pathogenic Escherichia coli strain O1:K1:H7 shares strong similarities with human extraintestinal pathogenic E. coli genomes.</title>
        <authorList>
            <person name="Johnson T.J."/>
            <person name="Kariyawasam S."/>
            <person name="Wannemuehler Y."/>
            <person name="Mangiamele P."/>
            <person name="Johnson S.J."/>
            <person name="Doetkott C."/>
            <person name="Skyberg J.A."/>
            <person name="Lynne A.M."/>
            <person name="Johnson J.R."/>
            <person name="Nolan L.K."/>
        </authorList>
    </citation>
    <scope>NUCLEOTIDE SEQUENCE [LARGE SCALE GENOMIC DNA]</scope>
</reference>
<accession>A1ABS3</accession>
<proteinExistence type="inferred from homology"/>
<gene>
    <name evidence="1" type="primary">ves</name>
    <name type="ordered locus">Ecok1_16190</name>
    <name type="ORF">APECO1_811</name>
</gene>
<protein>
    <recommendedName>
        <fullName evidence="1">Protein Ves</fullName>
    </recommendedName>
</protein>
<name>VES_ECOK1</name>
<sequence>MEYFDMRKMSVNLWRNAAGETREICTFPPAKRDFYWRASITSIAANGEFSLFPGMERIVTLLEGGEMFLESADRFNHTLKPLQPFSFAADLVVKAKLTAGQMSMDFNIMTRLDVCKAKVRIAERTFTTFGSRGGVVFVINGAWQLGDKLLTTDQGACWFDGRHTLRLLQPQGKLLFSEINWLAGHSPDQVQ</sequence>
<keyword id="KW-1185">Reference proteome</keyword>
<dbReference type="EMBL" id="CP000468">
    <property type="protein sequence ID" value="ABJ01113.1"/>
    <property type="molecule type" value="Genomic_DNA"/>
</dbReference>
<dbReference type="RefSeq" id="WP_000455604.1">
    <property type="nucleotide sequence ID" value="NZ_CADILS010000002.1"/>
</dbReference>
<dbReference type="SMR" id="A1ABS3"/>
<dbReference type="KEGG" id="ecv:APECO1_811"/>
<dbReference type="HOGENOM" id="CLU_090931_5_0_6"/>
<dbReference type="Proteomes" id="UP000008216">
    <property type="component" value="Chromosome"/>
</dbReference>
<dbReference type="CDD" id="cd20293">
    <property type="entry name" value="cupin_HutD_N"/>
    <property type="match status" value="1"/>
</dbReference>
<dbReference type="Gene3D" id="2.60.120.10">
    <property type="entry name" value="Jelly Rolls"/>
    <property type="match status" value="1"/>
</dbReference>
<dbReference type="HAMAP" id="MF_01591">
    <property type="entry name" value="Ves"/>
    <property type="match status" value="1"/>
</dbReference>
<dbReference type="InterPro" id="IPR014710">
    <property type="entry name" value="RmlC-like_jellyroll"/>
</dbReference>
<dbReference type="InterPro" id="IPR011051">
    <property type="entry name" value="RmlC_Cupin_sf"/>
</dbReference>
<dbReference type="InterPro" id="IPR010282">
    <property type="entry name" value="Uncharacterised_HutD/Ves"/>
</dbReference>
<dbReference type="InterPro" id="IPR023482">
    <property type="entry name" value="Uncharacterised_Ves"/>
</dbReference>
<dbReference type="NCBIfam" id="NF008488">
    <property type="entry name" value="PRK11396.1"/>
    <property type="match status" value="1"/>
</dbReference>
<dbReference type="PANTHER" id="PTHR37943">
    <property type="entry name" value="PROTEIN VES"/>
    <property type="match status" value="1"/>
</dbReference>
<dbReference type="PANTHER" id="PTHR37943:SF1">
    <property type="entry name" value="PROTEIN VES"/>
    <property type="match status" value="1"/>
</dbReference>
<dbReference type="Pfam" id="PF05962">
    <property type="entry name" value="HutD"/>
    <property type="match status" value="1"/>
</dbReference>
<dbReference type="SUPFAM" id="SSF51182">
    <property type="entry name" value="RmlC-like cupins"/>
    <property type="match status" value="1"/>
</dbReference>
<organism>
    <name type="scientific">Escherichia coli O1:K1 / APEC</name>
    <dbReference type="NCBI Taxonomy" id="405955"/>
    <lineage>
        <taxon>Bacteria</taxon>
        <taxon>Pseudomonadati</taxon>
        <taxon>Pseudomonadota</taxon>
        <taxon>Gammaproteobacteria</taxon>
        <taxon>Enterobacterales</taxon>
        <taxon>Enterobacteriaceae</taxon>
        <taxon>Escherichia</taxon>
    </lineage>
</organism>
<feature type="chain" id="PRO_0000315005" description="Protein Ves">
    <location>
        <begin position="1"/>
        <end position="191"/>
    </location>
</feature>